<sequence>MQIDDKLLTKLEKLSALKIADDKRQELEEQLSQIVNFVEKLDELKLDDVEAMTSTTNTATPFRLDESRKSDVIDMVSKHAPNSQDGFFIVPKIIE</sequence>
<reference key="1">
    <citation type="journal article" date="2008" name="Foodborne Pathog. Dis.">
        <title>The complete genome sequence and analysis of the human pathogen Campylobacter lari.</title>
        <authorList>
            <person name="Miller W.G."/>
            <person name="Wang G."/>
            <person name="Binnewies T.T."/>
            <person name="Parker C.T."/>
        </authorList>
    </citation>
    <scope>NUCLEOTIDE SEQUENCE [LARGE SCALE GENOMIC DNA]</scope>
    <source>
        <strain>RM2100 / D67 / ATCC BAA-1060</strain>
    </source>
</reference>
<keyword id="KW-0067">ATP-binding</keyword>
<keyword id="KW-0436">Ligase</keyword>
<keyword id="KW-0547">Nucleotide-binding</keyword>
<keyword id="KW-0648">Protein biosynthesis</keyword>
<keyword id="KW-1185">Reference proteome</keyword>
<dbReference type="EC" id="6.3.5.-" evidence="1"/>
<dbReference type="EMBL" id="CP000932">
    <property type="protein sequence ID" value="ACM63833.1"/>
    <property type="molecule type" value="Genomic_DNA"/>
</dbReference>
<dbReference type="RefSeq" id="WP_012661216.1">
    <property type="nucleotide sequence ID" value="NC_012039.1"/>
</dbReference>
<dbReference type="SMR" id="B9KFJ8"/>
<dbReference type="STRING" id="306263.Cla_0485"/>
<dbReference type="KEGG" id="cla:CLA_0485"/>
<dbReference type="PATRIC" id="fig|306263.5.peg.480"/>
<dbReference type="eggNOG" id="COG0721">
    <property type="taxonomic scope" value="Bacteria"/>
</dbReference>
<dbReference type="HOGENOM" id="CLU_105899_2_1_7"/>
<dbReference type="Proteomes" id="UP000007727">
    <property type="component" value="Chromosome"/>
</dbReference>
<dbReference type="GO" id="GO:0050566">
    <property type="term" value="F:asparaginyl-tRNA synthase (glutamine-hydrolyzing) activity"/>
    <property type="evidence" value="ECO:0007669"/>
    <property type="project" value="RHEA"/>
</dbReference>
<dbReference type="GO" id="GO:0005524">
    <property type="term" value="F:ATP binding"/>
    <property type="evidence" value="ECO:0007669"/>
    <property type="project" value="UniProtKB-KW"/>
</dbReference>
<dbReference type="GO" id="GO:0050567">
    <property type="term" value="F:glutaminyl-tRNA synthase (glutamine-hydrolyzing) activity"/>
    <property type="evidence" value="ECO:0007669"/>
    <property type="project" value="UniProtKB-UniRule"/>
</dbReference>
<dbReference type="GO" id="GO:0070681">
    <property type="term" value="P:glutaminyl-tRNAGln biosynthesis via transamidation"/>
    <property type="evidence" value="ECO:0007669"/>
    <property type="project" value="TreeGrafter"/>
</dbReference>
<dbReference type="GO" id="GO:0006450">
    <property type="term" value="P:regulation of translational fidelity"/>
    <property type="evidence" value="ECO:0007669"/>
    <property type="project" value="InterPro"/>
</dbReference>
<dbReference type="GO" id="GO:0006412">
    <property type="term" value="P:translation"/>
    <property type="evidence" value="ECO:0007669"/>
    <property type="project" value="UniProtKB-UniRule"/>
</dbReference>
<dbReference type="Gene3D" id="1.10.20.60">
    <property type="entry name" value="Glu-tRNAGln amidotransferase C subunit, N-terminal domain"/>
    <property type="match status" value="1"/>
</dbReference>
<dbReference type="HAMAP" id="MF_00122">
    <property type="entry name" value="GatC"/>
    <property type="match status" value="1"/>
</dbReference>
<dbReference type="InterPro" id="IPR036113">
    <property type="entry name" value="Asp/Glu-ADT_sf_sub_c"/>
</dbReference>
<dbReference type="InterPro" id="IPR003837">
    <property type="entry name" value="GatC"/>
</dbReference>
<dbReference type="NCBIfam" id="TIGR00135">
    <property type="entry name" value="gatC"/>
    <property type="match status" value="1"/>
</dbReference>
<dbReference type="PANTHER" id="PTHR15004">
    <property type="entry name" value="GLUTAMYL-TRNA(GLN) AMIDOTRANSFERASE SUBUNIT C, MITOCHONDRIAL"/>
    <property type="match status" value="1"/>
</dbReference>
<dbReference type="PANTHER" id="PTHR15004:SF0">
    <property type="entry name" value="GLUTAMYL-TRNA(GLN) AMIDOTRANSFERASE SUBUNIT C, MITOCHONDRIAL"/>
    <property type="match status" value="1"/>
</dbReference>
<dbReference type="Pfam" id="PF02686">
    <property type="entry name" value="GatC"/>
    <property type="match status" value="1"/>
</dbReference>
<dbReference type="SUPFAM" id="SSF141000">
    <property type="entry name" value="Glu-tRNAGln amidotransferase C subunit"/>
    <property type="match status" value="1"/>
</dbReference>
<comment type="function">
    <text evidence="1">Allows the formation of correctly charged Asn-tRNA(Asn) or Gln-tRNA(Gln) through the transamidation of misacylated Asp-tRNA(Asn) or Glu-tRNA(Gln) in organisms which lack either or both of asparaginyl-tRNA or glutaminyl-tRNA synthetases. The reaction takes place in the presence of glutamine and ATP through an activated phospho-Asp-tRNA(Asn) or phospho-Glu-tRNA(Gln).</text>
</comment>
<comment type="catalytic activity">
    <reaction evidence="1">
        <text>L-glutamyl-tRNA(Gln) + L-glutamine + ATP + H2O = L-glutaminyl-tRNA(Gln) + L-glutamate + ADP + phosphate + H(+)</text>
        <dbReference type="Rhea" id="RHEA:17521"/>
        <dbReference type="Rhea" id="RHEA-COMP:9681"/>
        <dbReference type="Rhea" id="RHEA-COMP:9684"/>
        <dbReference type="ChEBI" id="CHEBI:15377"/>
        <dbReference type="ChEBI" id="CHEBI:15378"/>
        <dbReference type="ChEBI" id="CHEBI:29985"/>
        <dbReference type="ChEBI" id="CHEBI:30616"/>
        <dbReference type="ChEBI" id="CHEBI:43474"/>
        <dbReference type="ChEBI" id="CHEBI:58359"/>
        <dbReference type="ChEBI" id="CHEBI:78520"/>
        <dbReference type="ChEBI" id="CHEBI:78521"/>
        <dbReference type="ChEBI" id="CHEBI:456216"/>
    </reaction>
</comment>
<comment type="catalytic activity">
    <reaction evidence="1">
        <text>L-aspartyl-tRNA(Asn) + L-glutamine + ATP + H2O = L-asparaginyl-tRNA(Asn) + L-glutamate + ADP + phosphate + 2 H(+)</text>
        <dbReference type="Rhea" id="RHEA:14513"/>
        <dbReference type="Rhea" id="RHEA-COMP:9674"/>
        <dbReference type="Rhea" id="RHEA-COMP:9677"/>
        <dbReference type="ChEBI" id="CHEBI:15377"/>
        <dbReference type="ChEBI" id="CHEBI:15378"/>
        <dbReference type="ChEBI" id="CHEBI:29985"/>
        <dbReference type="ChEBI" id="CHEBI:30616"/>
        <dbReference type="ChEBI" id="CHEBI:43474"/>
        <dbReference type="ChEBI" id="CHEBI:58359"/>
        <dbReference type="ChEBI" id="CHEBI:78515"/>
        <dbReference type="ChEBI" id="CHEBI:78516"/>
        <dbReference type="ChEBI" id="CHEBI:456216"/>
    </reaction>
</comment>
<comment type="subunit">
    <text evidence="1">Heterotrimer of A, B and C subunits.</text>
</comment>
<comment type="similarity">
    <text evidence="1">Belongs to the GatC family.</text>
</comment>
<proteinExistence type="inferred from homology"/>
<evidence type="ECO:0000255" key="1">
    <source>
        <dbReference type="HAMAP-Rule" id="MF_00122"/>
    </source>
</evidence>
<feature type="chain" id="PRO_1000122557" description="Aspartyl/glutamyl-tRNA(Asn/Gln) amidotransferase subunit C">
    <location>
        <begin position="1"/>
        <end position="95"/>
    </location>
</feature>
<name>GATC_CAMLR</name>
<gene>
    <name evidence="1" type="primary">gatC</name>
    <name type="ordered locus">Cla_0485</name>
</gene>
<protein>
    <recommendedName>
        <fullName evidence="1">Aspartyl/glutamyl-tRNA(Asn/Gln) amidotransferase subunit C</fullName>
        <shortName evidence="1">Asp/Glu-ADT subunit C</shortName>
        <ecNumber evidence="1">6.3.5.-</ecNumber>
    </recommendedName>
</protein>
<accession>B9KFJ8</accession>
<organism>
    <name type="scientific">Campylobacter lari (strain RM2100 / D67 / ATCC BAA-1060)</name>
    <dbReference type="NCBI Taxonomy" id="306263"/>
    <lineage>
        <taxon>Bacteria</taxon>
        <taxon>Pseudomonadati</taxon>
        <taxon>Campylobacterota</taxon>
        <taxon>Epsilonproteobacteria</taxon>
        <taxon>Campylobacterales</taxon>
        <taxon>Campylobacteraceae</taxon>
        <taxon>Campylobacter</taxon>
    </lineage>
</organism>